<accession>Q5HEQ8</accession>
<proteinExistence type="inferred from homology"/>
<sequence length="578" mass="64863">MIKRYLQFVKPYKYRIFATIIVGIIKFGIPMLIPLLIKYAIDGVINNHALTTDEKVHHLTIAIGIALFIFVIVRPPIEFIRQYLAQWTSNKILYDIRKKLYNHLQALSARFYANNQVGQVISRVINDVEQTKDFILTGLMNIWLDCITIIIALSIMFFLDVKLTLAALFIFPFYILTVYVFFGRLRKLTRERSQALAEVQGFLHERVQGISVVKSFAIEDNEAKNFDKKNTNFLTRALKHTRWNAYSFAAINTVTDIGPIIVIGVGAYLAISGSITVGTLAAFVGYLELLFGPLRRLVASFTTLTQSFASMDRVFQLIDEDYDIKNGVGAQPIEIKQGRIDIDHVSFQYNDNEAPILKDINLSIEKGETVAFVGMSGGGKSTLINLIPRFYDVTSGQILIDGHNIKDFLTGSLRNQIGLVQQDNILFSDTVKENILLGRPTATDEEVVEAAKMANAHDFIMNLPQGYDTEVGERGVKLSGGQKQRLSIARIFLNNPPILILDEATSALDLESESIIQEALDVLSKDRTTLIVAHRLSTITHADKIVVIENGHIVETGTHRELIAKQGAYEHLYSIQNL</sequence>
<organism>
    <name type="scientific">Staphylococcus aureus (strain COL)</name>
    <dbReference type="NCBI Taxonomy" id="93062"/>
    <lineage>
        <taxon>Bacteria</taxon>
        <taxon>Bacillati</taxon>
        <taxon>Bacillota</taxon>
        <taxon>Bacilli</taxon>
        <taxon>Bacillales</taxon>
        <taxon>Staphylococcaceae</taxon>
        <taxon>Staphylococcus</taxon>
    </lineage>
</organism>
<keyword id="KW-0067">ATP-binding</keyword>
<keyword id="KW-1003">Cell membrane</keyword>
<keyword id="KW-0472">Membrane</keyword>
<keyword id="KW-0547">Nucleotide-binding</keyword>
<keyword id="KW-1278">Translocase</keyword>
<keyword id="KW-0812">Transmembrane</keyword>
<keyword id="KW-1133">Transmembrane helix</keyword>
<keyword id="KW-0813">Transport</keyword>
<name>Y1924_STAAC</name>
<protein>
    <recommendedName>
        <fullName>Putative multidrug export ATP-binding/permease protein SACOL1924</fullName>
        <ecNumber>7.6.2.-</ecNumber>
    </recommendedName>
</protein>
<comment type="function">
    <text evidence="1">May be involved in multidrug export. Transmembrane domains (TMD) form a pore in the cell membrane and the ATP-binding domain (NBD) is responsible for energy generation (By similarity).</text>
</comment>
<comment type="subunit">
    <text evidence="1">Homodimer.</text>
</comment>
<comment type="subcellular location">
    <subcellularLocation>
        <location evidence="1">Cell membrane</location>
        <topology evidence="4">Multi-pass membrane protein</topology>
    </subcellularLocation>
</comment>
<comment type="domain">
    <text>The ATP-binding domain (NBD) and the transmembrane domain (TMD) are fused.</text>
</comment>
<comment type="similarity">
    <text evidence="5">Belongs to the ABC transporter superfamily.</text>
</comment>
<feature type="chain" id="PRO_0000271548" description="Putative multidrug export ATP-binding/permease protein SACOL1924">
    <location>
        <begin position="1"/>
        <end position="578"/>
    </location>
</feature>
<feature type="topological domain" description="Cytoplasmic" evidence="2">
    <location>
        <begin position="1"/>
        <end position="15"/>
    </location>
</feature>
<feature type="transmembrane region" description="Helical" evidence="4">
    <location>
        <begin position="16"/>
        <end position="36"/>
    </location>
</feature>
<feature type="topological domain" description="Extracellular" evidence="2">
    <location>
        <begin position="37"/>
        <end position="59"/>
    </location>
</feature>
<feature type="transmembrane region" description="Helical" evidence="4">
    <location>
        <begin position="60"/>
        <end position="80"/>
    </location>
</feature>
<feature type="topological domain" description="Cytoplasmic" evidence="2">
    <location>
        <begin position="81"/>
        <end position="138"/>
    </location>
</feature>
<feature type="transmembrane region" description="Helical" evidence="4">
    <location>
        <begin position="139"/>
        <end position="159"/>
    </location>
</feature>
<feature type="topological domain" description="Extracellular" evidence="2">
    <location>
        <begin position="160"/>
        <end position="162"/>
    </location>
</feature>
<feature type="transmembrane region" description="Helical" evidence="4">
    <location>
        <begin position="163"/>
        <end position="183"/>
    </location>
</feature>
<feature type="topological domain" description="Cytoplasmic" evidence="2">
    <location>
        <begin position="184"/>
        <end position="244"/>
    </location>
</feature>
<feature type="transmembrane region" description="Helical" evidence="4">
    <location>
        <begin position="245"/>
        <end position="263"/>
    </location>
</feature>
<feature type="topological domain" description="Extracellular" evidence="2">
    <location>
        <begin position="264"/>
        <end position="269"/>
    </location>
</feature>
<feature type="transmembrane region" description="Helical" evidence="4">
    <location>
        <begin position="270"/>
        <end position="287"/>
    </location>
</feature>
<feature type="topological domain" description="Cytoplasmic" evidence="2">
    <location>
        <begin position="288"/>
        <end position="578"/>
    </location>
</feature>
<feature type="domain" description="ABC transmembrane type-1" evidence="4">
    <location>
        <begin position="16"/>
        <end position="306"/>
    </location>
</feature>
<feature type="domain" description="ABC transporter" evidence="3">
    <location>
        <begin position="340"/>
        <end position="575"/>
    </location>
</feature>
<feature type="binding site" evidence="3">
    <location>
        <begin position="374"/>
        <end position="381"/>
    </location>
    <ligand>
        <name>ATP</name>
        <dbReference type="ChEBI" id="CHEBI:30616"/>
    </ligand>
</feature>
<gene>
    <name type="ordered locus">SACOL1924</name>
</gene>
<dbReference type="EC" id="7.6.2.-"/>
<dbReference type="EMBL" id="CP000046">
    <property type="protein sequence ID" value="AAW38365.1"/>
    <property type="molecule type" value="Genomic_DNA"/>
</dbReference>
<dbReference type="RefSeq" id="WP_000597238.1">
    <property type="nucleotide sequence ID" value="NZ_JBGOFO010000006.1"/>
</dbReference>
<dbReference type="SMR" id="Q5HEQ8"/>
<dbReference type="KEGG" id="sac:SACOL1924"/>
<dbReference type="HOGENOM" id="CLU_000604_84_3_9"/>
<dbReference type="Proteomes" id="UP000000530">
    <property type="component" value="Chromosome"/>
</dbReference>
<dbReference type="GO" id="GO:0005886">
    <property type="term" value="C:plasma membrane"/>
    <property type="evidence" value="ECO:0007669"/>
    <property type="project" value="UniProtKB-SubCell"/>
</dbReference>
<dbReference type="GO" id="GO:0015421">
    <property type="term" value="F:ABC-type oligopeptide transporter activity"/>
    <property type="evidence" value="ECO:0007669"/>
    <property type="project" value="TreeGrafter"/>
</dbReference>
<dbReference type="GO" id="GO:0005524">
    <property type="term" value="F:ATP binding"/>
    <property type="evidence" value="ECO:0007669"/>
    <property type="project" value="UniProtKB-KW"/>
</dbReference>
<dbReference type="GO" id="GO:0016887">
    <property type="term" value="F:ATP hydrolysis activity"/>
    <property type="evidence" value="ECO:0007669"/>
    <property type="project" value="InterPro"/>
</dbReference>
<dbReference type="CDD" id="cd18554">
    <property type="entry name" value="ABC_6TM_Sav1866_like"/>
    <property type="match status" value="1"/>
</dbReference>
<dbReference type="CDD" id="cd03251">
    <property type="entry name" value="ABCC_MsbA"/>
    <property type="match status" value="1"/>
</dbReference>
<dbReference type="FunFam" id="1.20.1560.10:FF:000069">
    <property type="entry name" value="Multidrug ABC transporter ATP-binding protein"/>
    <property type="match status" value="1"/>
</dbReference>
<dbReference type="FunFam" id="3.40.50.300:FF:000218">
    <property type="entry name" value="Multidrug ABC transporter ATP-binding protein"/>
    <property type="match status" value="1"/>
</dbReference>
<dbReference type="Gene3D" id="1.20.1560.10">
    <property type="entry name" value="ABC transporter type 1, transmembrane domain"/>
    <property type="match status" value="1"/>
</dbReference>
<dbReference type="Gene3D" id="3.40.50.300">
    <property type="entry name" value="P-loop containing nucleotide triphosphate hydrolases"/>
    <property type="match status" value="1"/>
</dbReference>
<dbReference type="InterPro" id="IPR003593">
    <property type="entry name" value="AAA+_ATPase"/>
</dbReference>
<dbReference type="InterPro" id="IPR011527">
    <property type="entry name" value="ABC1_TM_dom"/>
</dbReference>
<dbReference type="InterPro" id="IPR036640">
    <property type="entry name" value="ABC1_TM_sf"/>
</dbReference>
<dbReference type="InterPro" id="IPR003439">
    <property type="entry name" value="ABC_transporter-like_ATP-bd"/>
</dbReference>
<dbReference type="InterPro" id="IPR017871">
    <property type="entry name" value="ABC_transporter-like_CS"/>
</dbReference>
<dbReference type="InterPro" id="IPR027417">
    <property type="entry name" value="P-loop_NTPase"/>
</dbReference>
<dbReference type="InterPro" id="IPR039421">
    <property type="entry name" value="Type_1_exporter"/>
</dbReference>
<dbReference type="PANTHER" id="PTHR43394:SF1">
    <property type="entry name" value="ATP-BINDING CASSETTE SUB-FAMILY B MEMBER 10, MITOCHONDRIAL"/>
    <property type="match status" value="1"/>
</dbReference>
<dbReference type="PANTHER" id="PTHR43394">
    <property type="entry name" value="ATP-DEPENDENT PERMEASE MDL1, MITOCHONDRIAL"/>
    <property type="match status" value="1"/>
</dbReference>
<dbReference type="Pfam" id="PF00664">
    <property type="entry name" value="ABC_membrane"/>
    <property type="match status" value="1"/>
</dbReference>
<dbReference type="Pfam" id="PF00005">
    <property type="entry name" value="ABC_tran"/>
    <property type="match status" value="1"/>
</dbReference>
<dbReference type="SMART" id="SM00382">
    <property type="entry name" value="AAA"/>
    <property type="match status" value="1"/>
</dbReference>
<dbReference type="SUPFAM" id="SSF90123">
    <property type="entry name" value="ABC transporter transmembrane region"/>
    <property type="match status" value="1"/>
</dbReference>
<dbReference type="SUPFAM" id="SSF52540">
    <property type="entry name" value="P-loop containing nucleoside triphosphate hydrolases"/>
    <property type="match status" value="1"/>
</dbReference>
<dbReference type="PROSITE" id="PS50929">
    <property type="entry name" value="ABC_TM1F"/>
    <property type="match status" value="1"/>
</dbReference>
<dbReference type="PROSITE" id="PS00211">
    <property type="entry name" value="ABC_TRANSPORTER_1"/>
    <property type="match status" value="1"/>
</dbReference>
<dbReference type="PROSITE" id="PS50893">
    <property type="entry name" value="ABC_TRANSPORTER_2"/>
    <property type="match status" value="1"/>
</dbReference>
<reference key="1">
    <citation type="journal article" date="2005" name="J. Bacteriol.">
        <title>Insights on evolution of virulence and resistance from the complete genome analysis of an early methicillin-resistant Staphylococcus aureus strain and a biofilm-producing methicillin-resistant Staphylococcus epidermidis strain.</title>
        <authorList>
            <person name="Gill S.R."/>
            <person name="Fouts D.E."/>
            <person name="Archer G.L."/>
            <person name="Mongodin E.F."/>
            <person name="DeBoy R.T."/>
            <person name="Ravel J."/>
            <person name="Paulsen I.T."/>
            <person name="Kolonay J.F."/>
            <person name="Brinkac L.M."/>
            <person name="Beanan M.J."/>
            <person name="Dodson R.J."/>
            <person name="Daugherty S.C."/>
            <person name="Madupu R."/>
            <person name="Angiuoli S.V."/>
            <person name="Durkin A.S."/>
            <person name="Haft D.H."/>
            <person name="Vamathevan J.J."/>
            <person name="Khouri H."/>
            <person name="Utterback T.R."/>
            <person name="Lee C."/>
            <person name="Dimitrov G."/>
            <person name="Jiang L."/>
            <person name="Qin H."/>
            <person name="Weidman J."/>
            <person name="Tran K."/>
            <person name="Kang K.H."/>
            <person name="Hance I.R."/>
            <person name="Nelson K.E."/>
            <person name="Fraser C.M."/>
        </authorList>
    </citation>
    <scope>NUCLEOTIDE SEQUENCE [LARGE SCALE GENOMIC DNA]</scope>
    <source>
        <strain>COL</strain>
    </source>
</reference>
<evidence type="ECO:0000250" key="1"/>
<evidence type="ECO:0000255" key="2"/>
<evidence type="ECO:0000255" key="3">
    <source>
        <dbReference type="PROSITE-ProRule" id="PRU00434"/>
    </source>
</evidence>
<evidence type="ECO:0000255" key="4">
    <source>
        <dbReference type="PROSITE-ProRule" id="PRU00441"/>
    </source>
</evidence>
<evidence type="ECO:0000305" key="5"/>